<dbReference type="EC" id="2.4.1.-" evidence="3"/>
<dbReference type="EMBL" id="BX284605">
    <property type="protein sequence ID" value="CCD68841.1"/>
    <property type="molecule type" value="Genomic_DNA"/>
</dbReference>
<dbReference type="PIR" id="T34405">
    <property type="entry name" value="T34405"/>
</dbReference>
<dbReference type="RefSeq" id="NP_504671.1">
    <property type="nucleotide sequence ID" value="NM_072270.2"/>
</dbReference>
<dbReference type="FunCoup" id="P91200">
    <property type="interactions" value="13"/>
</dbReference>
<dbReference type="STRING" id="6239.EGAP9.2.1"/>
<dbReference type="CAZy" id="GT11">
    <property type="family name" value="Glycosyltransferase Family 11"/>
</dbReference>
<dbReference type="GlyCosmos" id="P91200">
    <property type="glycosylation" value="3 sites, No reported glycans"/>
</dbReference>
<dbReference type="PaxDb" id="6239-EGAP9.2"/>
<dbReference type="PeptideAtlas" id="P91200"/>
<dbReference type="EnsemblMetazoa" id="EGAP9.2.1">
    <property type="protein sequence ID" value="EGAP9.2.1"/>
    <property type="gene ID" value="WBGene00001506"/>
</dbReference>
<dbReference type="GeneID" id="184050"/>
<dbReference type="KEGG" id="cel:CELE_EGAP9.2"/>
<dbReference type="UCSC" id="EGAP9.2">
    <property type="organism name" value="c. elegans"/>
</dbReference>
<dbReference type="AGR" id="WB:WBGene00001506"/>
<dbReference type="CTD" id="184050"/>
<dbReference type="WormBase" id="EGAP9.2">
    <property type="protein sequence ID" value="CE09151"/>
    <property type="gene ID" value="WBGene00001506"/>
    <property type="gene designation" value="fut-2"/>
</dbReference>
<dbReference type="eggNOG" id="ENOG502SGEF">
    <property type="taxonomic scope" value="Eukaryota"/>
</dbReference>
<dbReference type="GeneTree" id="ENSGT00530000064380"/>
<dbReference type="HOGENOM" id="CLU_785801_0_0_1"/>
<dbReference type="InParanoid" id="P91200"/>
<dbReference type="OMA" id="ENFIREP"/>
<dbReference type="OrthoDB" id="5854901at2759"/>
<dbReference type="PhylomeDB" id="P91200"/>
<dbReference type="UniPathway" id="UPA00378"/>
<dbReference type="PRO" id="PR:P91200"/>
<dbReference type="Proteomes" id="UP000001940">
    <property type="component" value="Chromosome V"/>
</dbReference>
<dbReference type="Bgee" id="WBGene00001506">
    <property type="expression patterns" value="Expressed in embryo and 3 other cell types or tissues"/>
</dbReference>
<dbReference type="GO" id="GO:0032580">
    <property type="term" value="C:Golgi cisterna membrane"/>
    <property type="evidence" value="ECO:0007669"/>
    <property type="project" value="UniProtKB-SubCell"/>
</dbReference>
<dbReference type="GO" id="GO:0008107">
    <property type="term" value="F:galactoside 2-alpha-L-fucosyltransferase activity"/>
    <property type="evidence" value="ECO:0000314"/>
    <property type="project" value="WormBase"/>
</dbReference>
<dbReference type="GO" id="GO:0005975">
    <property type="term" value="P:carbohydrate metabolic process"/>
    <property type="evidence" value="ECO:0007669"/>
    <property type="project" value="InterPro"/>
</dbReference>
<dbReference type="GO" id="GO:0043413">
    <property type="term" value="P:macromolecule glycosylation"/>
    <property type="evidence" value="ECO:0000314"/>
    <property type="project" value="WormBase"/>
</dbReference>
<dbReference type="GO" id="GO:0006486">
    <property type="term" value="P:protein glycosylation"/>
    <property type="evidence" value="ECO:0007669"/>
    <property type="project" value="UniProtKB-UniPathway"/>
</dbReference>
<dbReference type="CDD" id="cd11301">
    <property type="entry name" value="Fut1_Fut2_like"/>
    <property type="match status" value="1"/>
</dbReference>
<dbReference type="InterPro" id="IPR052501">
    <property type="entry name" value="Alpha-1-2_FucT"/>
</dbReference>
<dbReference type="InterPro" id="IPR002516">
    <property type="entry name" value="Glyco_trans_11"/>
</dbReference>
<dbReference type="PANTHER" id="PTHR22898:SF4">
    <property type="entry name" value="GALACTOSIDE 2-ALPHA-L-FUCOSYLTRANSFERASE-RELATED"/>
    <property type="match status" value="1"/>
</dbReference>
<dbReference type="PANTHER" id="PTHR22898">
    <property type="entry name" value="UNCHARACTERIZED GLYCOSOL TRANSFERASE-RELATED"/>
    <property type="match status" value="1"/>
</dbReference>
<dbReference type="Pfam" id="PF01531">
    <property type="entry name" value="Glyco_transf_11"/>
    <property type="match status" value="1"/>
</dbReference>
<reference evidence="8" key="1">
    <citation type="journal article" date="1998" name="Science">
        <title>Genome sequence of the nematode C. elegans: a platform for investigating biology.</title>
        <authorList>
            <consortium name="The C. elegans sequencing consortium"/>
        </authorList>
    </citation>
    <scope>NUCLEOTIDE SEQUENCE [LARGE SCALE GENOMIC DNA]</scope>
    <source>
        <strain evidence="8">Bristol N2</strain>
    </source>
</reference>
<reference evidence="5" key="2">
    <citation type="journal article" date="2002" name="J. Biol. Chem.">
        <title>Molecular cloning and characterization of a novel alpha 1,2-fucosyltransferase (CE2FT-1) from Caenorhabditis elegans.</title>
        <authorList>
            <person name="Zheng Q."/>
            <person name="Van Die I."/>
            <person name="Cummings R.D."/>
        </authorList>
    </citation>
    <scope>FUNCTION</scope>
    <scope>CATALYTIC ACTIVITY</scope>
    <scope>TISSUE SPECIFICITY</scope>
    <scope>DEVELOPMENTAL STAGE</scope>
</reference>
<gene>
    <name evidence="9" type="primary">fut-2</name>
    <name evidence="4" type="synonym">CE2FT-1</name>
    <name evidence="9" type="ORF">EGAP9.2</name>
</gene>
<name>FUTB1_CAEEL</name>
<protein>
    <recommendedName>
        <fullName evidence="7">Galactoside 2-alpha-L-fucosyltransferase</fullName>
        <ecNumber evidence="3">2.4.1.-</ecNumber>
    </recommendedName>
    <alternativeName>
        <fullName evidence="4">Alpha-(1,2)-fucosyltransferase fut-2</fullName>
    </alternativeName>
    <alternativeName>
        <fullName evidence="9">Fucosyltransferase fut-2</fullName>
    </alternativeName>
</protein>
<proteinExistence type="evidence at protein level"/>
<organism evidence="8">
    <name type="scientific">Caenorhabditis elegans</name>
    <dbReference type="NCBI Taxonomy" id="6239"/>
    <lineage>
        <taxon>Eukaryota</taxon>
        <taxon>Metazoa</taxon>
        <taxon>Ecdysozoa</taxon>
        <taxon>Nematoda</taxon>
        <taxon>Chromadorea</taxon>
        <taxon>Rhabditida</taxon>
        <taxon>Rhabditina</taxon>
        <taxon>Rhabditomorpha</taxon>
        <taxon>Rhabditoidea</taxon>
        <taxon>Rhabditidae</taxon>
        <taxon>Peloderinae</taxon>
        <taxon>Caenorhabditis</taxon>
    </lineage>
</organism>
<accession>P91200</accession>
<feature type="chain" id="PRO_0000438176" description="Galactoside 2-alpha-L-fucosyltransferase">
    <location>
        <begin position="1"/>
        <end position="355"/>
    </location>
</feature>
<feature type="topological domain" description="Cytoplasmic" evidence="5">
    <location>
        <begin position="1"/>
        <end position="15"/>
    </location>
</feature>
<feature type="transmembrane region" description="Helical; Signal-anchor for type II membrane protein" evidence="1">
    <location>
        <begin position="16"/>
        <end position="36"/>
    </location>
</feature>
<feature type="topological domain" description="Lumenal" evidence="5">
    <location>
        <begin position="37"/>
        <end position="355"/>
    </location>
</feature>
<feature type="glycosylation site" description="N-linked (GlcNAc...) asparagine" evidence="2">
    <location>
        <position position="92"/>
    </location>
</feature>
<feature type="glycosylation site" description="N-linked (GlcNAc...) asparagine" evidence="2">
    <location>
        <position position="311"/>
    </location>
</feature>
<feature type="glycosylation site" description="N-linked (GlcNAc...) asparagine" evidence="2">
    <location>
        <position position="349"/>
    </location>
</feature>
<sequence length="355" mass="41538">MRNVKGLFSYMTKTKSFYISIIVIIFIIFIVNRMGPRNYNYKQIGTEINCVKHKVDEQRYLLFPMITILYKYGLGNQLFEVFSLLGSAQTLNRTAIFNADDDILQSKLDLLQKQVPQVAARIISIPIEIAESTRYLFLPACCHYQFPSLFSCERSKFLVIDGQYFQSFKYFSAIDSLIRKLLKPPIDEEIILKKMIGRKDELRFKNCVHIRRGDYVNDFDHAETSSYFTIRAIDYVHTLHPGLVYLISDDPKWVRKQIAEHLDYHDDVKIMETPINAAIRDLYFSQAHCDSVLITAPSSTFGWWIGYMSKNQSNVYYRDIQETDDMVKYKMVEEDFFPPTWKKLGMSRNGSIISK</sequence>
<evidence type="ECO:0000255" key="1"/>
<evidence type="ECO:0000255" key="2">
    <source>
        <dbReference type="PROSITE-ProRule" id="PRU00498"/>
    </source>
</evidence>
<evidence type="ECO:0000269" key="3">
    <source>
    </source>
</evidence>
<evidence type="ECO:0000303" key="4">
    <source>
    </source>
</evidence>
<evidence type="ECO:0000305" key="5"/>
<evidence type="ECO:0000305" key="6">
    <source>
    </source>
</evidence>
<evidence type="ECO:0000312" key="7">
    <source>
        <dbReference type="EMBL" id="CCD68841.1"/>
    </source>
</evidence>
<evidence type="ECO:0000312" key="8">
    <source>
        <dbReference type="Proteomes" id="UP000001940"/>
    </source>
</evidence>
<evidence type="ECO:0000312" key="9">
    <source>
        <dbReference type="WormBase" id="EGAP9.2"/>
    </source>
</evidence>
<keyword id="KW-0325">Glycoprotein</keyword>
<keyword id="KW-0328">Glycosyltransferase</keyword>
<keyword id="KW-0333">Golgi apparatus</keyword>
<keyword id="KW-0472">Membrane</keyword>
<keyword id="KW-1185">Reference proteome</keyword>
<keyword id="KW-0735">Signal-anchor</keyword>
<keyword id="KW-0808">Transferase</keyword>
<keyword id="KW-0812">Transmembrane</keyword>
<keyword id="KW-1133">Transmembrane helix</keyword>
<comment type="function">
    <text evidence="3">Selectively catalyzes the addition of fucose in alpha 1-2 linkage to Gal-beta-(1-&gt;4)-Xyl-beta-R, Gal-beta-(1-&gt;6)-GlcNAc-R, Gal-beta-(1-&gt;3)-Gal-beta-(1-&gt;4)-Glc and Gal-beta-(1-&gt;3)-Gal-beta-(1-&gt;4)-Xyl-R acceptors but not Gal-beta-(1-&gt;3)-GlcNAc-beta-(1-&gt;3)-Gal-beta-(1-&gt;4)-Glc. Unlike in mammals, unable to fucosylate Gal-beta-(1-&gt;4)-Glc-beta-R.</text>
</comment>
<comment type="pathway">
    <text evidence="5">Protein modification; protein glycosylation.</text>
</comment>
<comment type="subcellular location">
    <subcellularLocation>
        <location evidence="6">Golgi apparatus</location>
        <location evidence="6">Golgi stack membrane</location>
        <topology evidence="6">Single-pass type II membrane protein</topology>
    </subcellularLocation>
</comment>
<comment type="tissue specificity">
    <text evidence="3">Expression is restricted to the 20 intestinal cells in larvae and adult.</text>
</comment>
<comment type="developmental stage">
    <text evidence="3">Expressed throughout development and in adult.</text>
</comment>
<comment type="similarity">
    <text evidence="5">Belongs to the glycosyltransferase 11 family.</text>
</comment>